<sequence>MRPPEFWNKPPSHFDLRACLLSPLGALYAKGTATRLRKGAPTRAPVPVICVGNLNAGGTGKTPTVIWLMEQLGAAGHEVHVVSRGYGGRLEGPVQVDPRRHSAADVGDEPLLMAAFGEVWVARDRGAGVTEAAAAGASVIVMDDGFQNPSVAKDFSIIVVDAKRGFGNGRCLPAGPLREPVATGLSRADLVLSLGDARAQETFQSIWGAEIPVPHLTGHVEPLPTGMPWQGTKVLAFAGIGHPEKFFATLRGLGAELCRAEALEDHQTLAPALLTRLEQEARLLGAQLVTTEKDAVRLPLSFRPKVITLPVRLRVAQGDTLLARLKDIAPPPD</sequence>
<gene>
    <name evidence="1" type="primary">lpxK</name>
    <name type="ordered locus">TM1040_2642</name>
</gene>
<evidence type="ECO:0000255" key="1">
    <source>
        <dbReference type="HAMAP-Rule" id="MF_00409"/>
    </source>
</evidence>
<protein>
    <recommendedName>
        <fullName evidence="1">Tetraacyldisaccharide 4'-kinase</fullName>
        <ecNumber evidence="1">2.7.1.130</ecNumber>
    </recommendedName>
    <alternativeName>
        <fullName evidence="1">Lipid A 4'-kinase</fullName>
    </alternativeName>
</protein>
<comment type="function">
    <text evidence="1">Transfers the gamma-phosphate of ATP to the 4'-position of a tetraacyldisaccharide 1-phosphate intermediate (termed DS-1-P) to form tetraacyldisaccharide 1,4'-bis-phosphate (lipid IVA).</text>
</comment>
<comment type="catalytic activity">
    <reaction evidence="1">
        <text>a lipid A disaccharide + ATP = a lipid IVA + ADP + H(+)</text>
        <dbReference type="Rhea" id="RHEA:67840"/>
        <dbReference type="ChEBI" id="CHEBI:15378"/>
        <dbReference type="ChEBI" id="CHEBI:30616"/>
        <dbReference type="ChEBI" id="CHEBI:176343"/>
        <dbReference type="ChEBI" id="CHEBI:176425"/>
        <dbReference type="ChEBI" id="CHEBI:456216"/>
        <dbReference type="EC" id="2.7.1.130"/>
    </reaction>
</comment>
<comment type="pathway">
    <text evidence="1">Glycolipid biosynthesis; lipid IV(A) biosynthesis; lipid IV(A) from (3R)-3-hydroxytetradecanoyl-[acyl-carrier-protein] and UDP-N-acetyl-alpha-D-glucosamine: step 6/6.</text>
</comment>
<comment type="similarity">
    <text evidence="1">Belongs to the LpxK family.</text>
</comment>
<accession>Q1GD92</accession>
<reference key="1">
    <citation type="submission" date="2006-05" db="EMBL/GenBank/DDBJ databases">
        <title>Complete sequence of chromosome of Silicibacter sp. TM1040.</title>
        <authorList>
            <consortium name="US DOE Joint Genome Institute"/>
            <person name="Copeland A."/>
            <person name="Lucas S."/>
            <person name="Lapidus A."/>
            <person name="Barry K."/>
            <person name="Detter J.C."/>
            <person name="Glavina del Rio T."/>
            <person name="Hammon N."/>
            <person name="Israni S."/>
            <person name="Dalin E."/>
            <person name="Tice H."/>
            <person name="Pitluck S."/>
            <person name="Brettin T."/>
            <person name="Bruce D."/>
            <person name="Han C."/>
            <person name="Tapia R."/>
            <person name="Goodwin L."/>
            <person name="Thompson L.S."/>
            <person name="Gilna P."/>
            <person name="Schmutz J."/>
            <person name="Larimer F."/>
            <person name="Land M."/>
            <person name="Hauser L."/>
            <person name="Kyrpides N."/>
            <person name="Kim E."/>
            <person name="Belas R."/>
            <person name="Moran M.A."/>
            <person name="Buchan A."/>
            <person name="Gonzalez J.M."/>
            <person name="Schell M.A."/>
            <person name="Sun F."/>
            <person name="Richardson P."/>
        </authorList>
    </citation>
    <scope>NUCLEOTIDE SEQUENCE [LARGE SCALE GENOMIC DNA]</scope>
    <source>
        <strain>TM1040</strain>
    </source>
</reference>
<organism>
    <name type="scientific">Ruegeria sp. (strain TM1040)</name>
    <name type="common">Silicibacter sp.</name>
    <dbReference type="NCBI Taxonomy" id="292414"/>
    <lineage>
        <taxon>Bacteria</taxon>
        <taxon>Pseudomonadati</taxon>
        <taxon>Pseudomonadota</taxon>
        <taxon>Alphaproteobacteria</taxon>
        <taxon>Rhodobacterales</taxon>
        <taxon>Roseobacteraceae</taxon>
        <taxon>Ruegeria</taxon>
    </lineage>
</organism>
<proteinExistence type="inferred from homology"/>
<keyword id="KW-0067">ATP-binding</keyword>
<keyword id="KW-0418">Kinase</keyword>
<keyword id="KW-0441">Lipid A biosynthesis</keyword>
<keyword id="KW-0444">Lipid biosynthesis</keyword>
<keyword id="KW-0443">Lipid metabolism</keyword>
<keyword id="KW-0547">Nucleotide-binding</keyword>
<keyword id="KW-1185">Reference proteome</keyword>
<keyword id="KW-0808">Transferase</keyword>
<dbReference type="EC" id="2.7.1.130" evidence="1"/>
<dbReference type="EMBL" id="CP000377">
    <property type="protein sequence ID" value="ABF65374.1"/>
    <property type="molecule type" value="Genomic_DNA"/>
</dbReference>
<dbReference type="RefSeq" id="WP_011539956.1">
    <property type="nucleotide sequence ID" value="NC_008044.1"/>
</dbReference>
<dbReference type="SMR" id="Q1GD92"/>
<dbReference type="STRING" id="292414.TM1040_2642"/>
<dbReference type="KEGG" id="sit:TM1040_2642"/>
<dbReference type="eggNOG" id="COG1663">
    <property type="taxonomic scope" value="Bacteria"/>
</dbReference>
<dbReference type="HOGENOM" id="CLU_038816_0_0_5"/>
<dbReference type="OrthoDB" id="9766423at2"/>
<dbReference type="UniPathway" id="UPA00359">
    <property type="reaction ID" value="UER00482"/>
</dbReference>
<dbReference type="Proteomes" id="UP000000636">
    <property type="component" value="Chromosome"/>
</dbReference>
<dbReference type="GO" id="GO:0005886">
    <property type="term" value="C:plasma membrane"/>
    <property type="evidence" value="ECO:0007669"/>
    <property type="project" value="TreeGrafter"/>
</dbReference>
<dbReference type="GO" id="GO:0005524">
    <property type="term" value="F:ATP binding"/>
    <property type="evidence" value="ECO:0007669"/>
    <property type="project" value="UniProtKB-UniRule"/>
</dbReference>
<dbReference type="GO" id="GO:0009029">
    <property type="term" value="F:tetraacyldisaccharide 4'-kinase activity"/>
    <property type="evidence" value="ECO:0007669"/>
    <property type="project" value="UniProtKB-UniRule"/>
</dbReference>
<dbReference type="GO" id="GO:0009245">
    <property type="term" value="P:lipid A biosynthetic process"/>
    <property type="evidence" value="ECO:0007669"/>
    <property type="project" value="UniProtKB-UniRule"/>
</dbReference>
<dbReference type="GO" id="GO:0009244">
    <property type="term" value="P:lipopolysaccharide core region biosynthetic process"/>
    <property type="evidence" value="ECO:0007669"/>
    <property type="project" value="TreeGrafter"/>
</dbReference>
<dbReference type="HAMAP" id="MF_00409">
    <property type="entry name" value="LpxK"/>
    <property type="match status" value="1"/>
</dbReference>
<dbReference type="InterPro" id="IPR003758">
    <property type="entry name" value="LpxK"/>
</dbReference>
<dbReference type="InterPro" id="IPR027417">
    <property type="entry name" value="P-loop_NTPase"/>
</dbReference>
<dbReference type="NCBIfam" id="TIGR00682">
    <property type="entry name" value="lpxK"/>
    <property type="match status" value="1"/>
</dbReference>
<dbReference type="PANTHER" id="PTHR42724">
    <property type="entry name" value="TETRAACYLDISACCHARIDE 4'-KINASE"/>
    <property type="match status" value="1"/>
</dbReference>
<dbReference type="PANTHER" id="PTHR42724:SF1">
    <property type="entry name" value="TETRAACYLDISACCHARIDE 4'-KINASE, MITOCHONDRIAL-RELATED"/>
    <property type="match status" value="1"/>
</dbReference>
<dbReference type="Pfam" id="PF02606">
    <property type="entry name" value="LpxK"/>
    <property type="match status" value="1"/>
</dbReference>
<dbReference type="SUPFAM" id="SSF52540">
    <property type="entry name" value="P-loop containing nucleoside triphosphate hydrolases"/>
    <property type="match status" value="1"/>
</dbReference>
<name>LPXK_RUEST</name>
<feature type="chain" id="PRO_0000291250" description="Tetraacyldisaccharide 4'-kinase">
    <location>
        <begin position="1"/>
        <end position="333"/>
    </location>
</feature>
<feature type="binding site" evidence="1">
    <location>
        <begin position="55"/>
        <end position="62"/>
    </location>
    <ligand>
        <name>ATP</name>
        <dbReference type="ChEBI" id="CHEBI:30616"/>
    </ligand>
</feature>